<sequence length="492" mass="54325">MNFKNINKCQLDWLFSTNHKDIGTLYLIFSAFAGIVGTTLSLLIRMELAQPGNQIFMGNHQLYNVVVTAHAFIMVFFLVMPALIGGFGNWFVPLMIGAPDMAFPRMNNISFWLLPPALLLLVSSAIVESGAGTGWTVYPPLSSVQAHSGPSVDLAIFSLHLTGISSLLGAINFISTIYNMRAPGLSFHRLPLFVWSVLITAFLLLLTLPVLAGAITMLLTDRNLNTSFYDPSGGGDPVLYQHLFWFFGHPEVYILILPAFGIISQVAAAFAKKNVFGYLGMVYAMLSIGLLGCIVWAHHMFTVGLDVDTRAYFSAATMIIAVPTGIKIFSWLATLWGGSLKFETPLLFVLGFILLFVVGGVTGVAMSNSGLDIAIHDTYYIVGHFHYVLSMGAVFGIFTGFYFWIGKISGRKYPEILGQIHFWLFFIGVNITFFPMHFLGLAGMPRRIPDFPDAMSGWNAVSSFGSYISFFSALFFFYIVYVTLVYGKKTEN</sequence>
<organism>
    <name type="scientific">Phytophthora megasperma</name>
    <name type="common">Potato pink rot fungus</name>
    <dbReference type="NCBI Taxonomy" id="4788"/>
    <lineage>
        <taxon>Eukaryota</taxon>
        <taxon>Sar</taxon>
        <taxon>Stramenopiles</taxon>
        <taxon>Oomycota</taxon>
        <taxon>Peronosporales</taxon>
        <taxon>Peronosporaceae</taxon>
        <taxon>Phytophthora</taxon>
    </lineage>
</organism>
<keyword id="KW-0106">Calcium</keyword>
<keyword id="KW-0186">Copper</keyword>
<keyword id="KW-0249">Electron transport</keyword>
<keyword id="KW-0349">Heme</keyword>
<keyword id="KW-0408">Iron</keyword>
<keyword id="KW-0460">Magnesium</keyword>
<keyword id="KW-0472">Membrane</keyword>
<keyword id="KW-0479">Metal-binding</keyword>
<keyword id="KW-0496">Mitochondrion</keyword>
<keyword id="KW-0999">Mitochondrion inner membrane</keyword>
<keyword id="KW-0679">Respiratory chain</keyword>
<keyword id="KW-1278">Translocase</keyword>
<keyword id="KW-0812">Transmembrane</keyword>
<keyword id="KW-1133">Transmembrane helix</keyword>
<keyword id="KW-0813">Transport</keyword>
<feature type="chain" id="PRO_0000183389" description="Cytochrome c oxidase subunit 1">
    <location>
        <begin position="1"/>
        <end position="492"/>
    </location>
</feature>
<feature type="transmembrane region" description="Helical" evidence="3">
    <location>
        <begin position="24"/>
        <end position="44"/>
    </location>
</feature>
<feature type="transmembrane region" description="Helical" evidence="3">
    <location>
        <begin position="72"/>
        <end position="92"/>
    </location>
</feature>
<feature type="transmembrane region" description="Helical" evidence="3">
    <location>
        <begin position="109"/>
        <end position="129"/>
    </location>
</feature>
<feature type="transmembrane region" description="Helical" evidence="3">
    <location>
        <begin position="154"/>
        <end position="174"/>
    </location>
</feature>
<feature type="transmembrane region" description="Helical" evidence="3">
    <location>
        <begin position="192"/>
        <end position="212"/>
    </location>
</feature>
<feature type="transmembrane region" description="Helical" evidence="3">
    <location>
        <begin position="243"/>
        <end position="263"/>
    </location>
</feature>
<feature type="transmembrane region" description="Helical" evidence="3">
    <location>
        <begin position="275"/>
        <end position="295"/>
    </location>
</feature>
<feature type="transmembrane region" description="Helical" evidence="3">
    <location>
        <begin position="318"/>
        <end position="338"/>
    </location>
</feature>
<feature type="transmembrane region" description="Helical" evidence="3">
    <location>
        <begin position="346"/>
        <end position="366"/>
    </location>
</feature>
<feature type="transmembrane region" description="Helical" evidence="3">
    <location>
        <begin position="385"/>
        <end position="405"/>
    </location>
</feature>
<feature type="transmembrane region" description="Helical" evidence="3">
    <location>
        <begin position="422"/>
        <end position="442"/>
    </location>
</feature>
<feature type="transmembrane region" description="Helical" evidence="3">
    <location>
        <begin position="467"/>
        <end position="487"/>
    </location>
</feature>
<feature type="binding site" evidence="2">
    <location>
        <position position="47"/>
    </location>
    <ligand>
        <name>Ca(2+)</name>
        <dbReference type="ChEBI" id="CHEBI:29108"/>
    </ligand>
</feature>
<feature type="binding site" evidence="2">
    <location>
        <position position="52"/>
    </location>
    <ligand>
        <name>Ca(2+)</name>
        <dbReference type="ChEBI" id="CHEBI:29108"/>
    </ligand>
</feature>
<feature type="binding site" description="axial binding residue" evidence="2">
    <location>
        <position position="70"/>
    </location>
    <ligand>
        <name>Fe(II)-heme a</name>
        <dbReference type="ChEBI" id="CHEBI:61715"/>
        <note>low-spin</note>
    </ligand>
    <ligandPart>
        <name>Fe</name>
        <dbReference type="ChEBI" id="CHEBI:18248"/>
    </ligandPart>
</feature>
<feature type="binding site" evidence="2">
    <location>
        <position position="249"/>
    </location>
    <ligand>
        <name>Cu cation</name>
        <dbReference type="ChEBI" id="CHEBI:23378"/>
        <label>B</label>
    </ligand>
</feature>
<feature type="binding site" evidence="1">
    <location>
        <position position="253"/>
    </location>
    <ligand>
        <name>O2</name>
        <dbReference type="ChEBI" id="CHEBI:15379"/>
    </ligand>
</feature>
<feature type="binding site" evidence="2">
    <location>
        <position position="298"/>
    </location>
    <ligand>
        <name>Cu cation</name>
        <dbReference type="ChEBI" id="CHEBI:23378"/>
        <label>B</label>
    </ligand>
</feature>
<feature type="binding site" evidence="2">
    <location>
        <position position="299"/>
    </location>
    <ligand>
        <name>Cu cation</name>
        <dbReference type="ChEBI" id="CHEBI:23378"/>
        <label>B</label>
    </ligand>
</feature>
<feature type="binding site" evidence="2">
    <location>
        <position position="376"/>
    </location>
    <ligand>
        <name>Mg(2+)</name>
        <dbReference type="ChEBI" id="CHEBI:18420"/>
        <note>ligand shared with subunit 2</note>
    </ligand>
</feature>
<feature type="binding site" evidence="2">
    <location>
        <position position="377"/>
    </location>
    <ligand>
        <name>Mg(2+)</name>
        <dbReference type="ChEBI" id="CHEBI:18420"/>
        <note>ligand shared with subunit 2</note>
    </ligand>
</feature>
<feature type="binding site" description="axial binding residue" evidence="2">
    <location>
        <position position="384"/>
    </location>
    <ligand>
        <name>heme a3</name>
        <dbReference type="ChEBI" id="CHEBI:83282"/>
        <note>high-spin</note>
    </ligand>
    <ligandPart>
        <name>Fe</name>
        <dbReference type="ChEBI" id="CHEBI:18248"/>
    </ligandPart>
</feature>
<feature type="binding site" description="axial binding residue" evidence="2">
    <location>
        <position position="386"/>
    </location>
    <ligand>
        <name>Fe(II)-heme a</name>
        <dbReference type="ChEBI" id="CHEBI:61715"/>
        <note>low-spin</note>
    </ligand>
    <ligandPart>
        <name>Fe</name>
        <dbReference type="ChEBI" id="CHEBI:18248"/>
    </ligandPart>
</feature>
<feature type="binding site" evidence="2">
    <location>
        <position position="449"/>
    </location>
    <ligand>
        <name>Ca(2+)</name>
        <dbReference type="ChEBI" id="CHEBI:29108"/>
    </ligand>
</feature>
<feature type="cross-link" description="1'-histidyl-3'-tyrosine (His-Tyr)" evidence="2">
    <location>
        <begin position="249"/>
        <end position="253"/>
    </location>
</feature>
<reference key="1">
    <citation type="journal article" date="1990" name="Curr. Genet.">
        <title>Genic rearrangements in Phytophthora mitochondrial DNA.</title>
        <authorList>
            <person name="Shumard-Hudspeth D.S."/>
            <person name="Hudspeth M.E."/>
        </authorList>
    </citation>
    <scope>NUCLEOTIDE SEQUENCE [GENOMIC DNA]</scope>
    <source>
        <strain>695T</strain>
    </source>
</reference>
<reference key="2">
    <citation type="journal article" date="1993" name="Exp. Mycol.">
        <title>Oomycete mtDNA: Phytophthora genes for cytochrome c oxidase use an unmodified genetic code and encode proteins most similar to plants.</title>
        <authorList>
            <person name="Sachay D.J."/>
            <person name="Hudspeth D.S."/>
            <person name="Nadler S.A."/>
            <person name="Hudspeth M.E."/>
        </authorList>
    </citation>
    <scope>NUCLEOTIDE SEQUENCE [GENOMIC DNA]</scope>
    <source>
        <strain>695T</strain>
    </source>
</reference>
<dbReference type="EC" id="7.1.1.9"/>
<dbReference type="EMBL" id="L04457">
    <property type="protein sequence ID" value="AAA32023.2"/>
    <property type="molecule type" value="Genomic_DNA"/>
</dbReference>
<dbReference type="SMR" id="Q02211"/>
<dbReference type="UniPathway" id="UPA00705"/>
<dbReference type="GO" id="GO:0005743">
    <property type="term" value="C:mitochondrial inner membrane"/>
    <property type="evidence" value="ECO:0007669"/>
    <property type="project" value="UniProtKB-SubCell"/>
</dbReference>
<dbReference type="GO" id="GO:0045277">
    <property type="term" value="C:respiratory chain complex IV"/>
    <property type="evidence" value="ECO:0007669"/>
    <property type="project" value="InterPro"/>
</dbReference>
<dbReference type="GO" id="GO:0004129">
    <property type="term" value="F:cytochrome-c oxidase activity"/>
    <property type="evidence" value="ECO:0007669"/>
    <property type="project" value="UniProtKB-EC"/>
</dbReference>
<dbReference type="GO" id="GO:0020037">
    <property type="term" value="F:heme binding"/>
    <property type="evidence" value="ECO:0007669"/>
    <property type="project" value="InterPro"/>
</dbReference>
<dbReference type="GO" id="GO:0046872">
    <property type="term" value="F:metal ion binding"/>
    <property type="evidence" value="ECO:0007669"/>
    <property type="project" value="UniProtKB-KW"/>
</dbReference>
<dbReference type="GO" id="GO:0015990">
    <property type="term" value="P:electron transport coupled proton transport"/>
    <property type="evidence" value="ECO:0007669"/>
    <property type="project" value="TreeGrafter"/>
</dbReference>
<dbReference type="GO" id="GO:0006123">
    <property type="term" value="P:mitochondrial electron transport, cytochrome c to oxygen"/>
    <property type="evidence" value="ECO:0007669"/>
    <property type="project" value="TreeGrafter"/>
</dbReference>
<dbReference type="CDD" id="cd01663">
    <property type="entry name" value="Cyt_c_Oxidase_I"/>
    <property type="match status" value="1"/>
</dbReference>
<dbReference type="FunFam" id="1.20.210.10:FF:000001">
    <property type="entry name" value="Cytochrome c oxidase subunit 1"/>
    <property type="match status" value="1"/>
</dbReference>
<dbReference type="Gene3D" id="1.20.210.10">
    <property type="entry name" value="Cytochrome c oxidase-like, subunit I domain"/>
    <property type="match status" value="1"/>
</dbReference>
<dbReference type="InterPro" id="IPR023616">
    <property type="entry name" value="Cyt_c_oxase-like_su1_dom"/>
</dbReference>
<dbReference type="InterPro" id="IPR036927">
    <property type="entry name" value="Cyt_c_oxase-like_su1_sf"/>
</dbReference>
<dbReference type="InterPro" id="IPR000883">
    <property type="entry name" value="Cyt_C_Oxase_1"/>
</dbReference>
<dbReference type="InterPro" id="IPR023615">
    <property type="entry name" value="Cyt_c_Oxase_su1_BS"/>
</dbReference>
<dbReference type="InterPro" id="IPR033944">
    <property type="entry name" value="Cyt_c_oxase_su1_dom"/>
</dbReference>
<dbReference type="PANTHER" id="PTHR10422">
    <property type="entry name" value="CYTOCHROME C OXIDASE SUBUNIT 1"/>
    <property type="match status" value="1"/>
</dbReference>
<dbReference type="PANTHER" id="PTHR10422:SF18">
    <property type="entry name" value="CYTOCHROME C OXIDASE SUBUNIT 1"/>
    <property type="match status" value="1"/>
</dbReference>
<dbReference type="Pfam" id="PF00115">
    <property type="entry name" value="COX1"/>
    <property type="match status" value="1"/>
</dbReference>
<dbReference type="PRINTS" id="PR01165">
    <property type="entry name" value="CYCOXIDASEI"/>
</dbReference>
<dbReference type="SUPFAM" id="SSF81442">
    <property type="entry name" value="Cytochrome c oxidase subunit I-like"/>
    <property type="match status" value="1"/>
</dbReference>
<dbReference type="PROSITE" id="PS50855">
    <property type="entry name" value="COX1"/>
    <property type="match status" value="1"/>
</dbReference>
<dbReference type="PROSITE" id="PS00077">
    <property type="entry name" value="COX1_CUB"/>
    <property type="match status" value="1"/>
</dbReference>
<accession>Q02211</accession>
<name>COX1_PHYME</name>
<geneLocation type="mitochondrion"/>
<evidence type="ECO:0000250" key="1">
    <source>
        <dbReference type="UniProtKB" id="P00396"/>
    </source>
</evidence>
<evidence type="ECO:0000250" key="2">
    <source>
        <dbReference type="UniProtKB" id="P00401"/>
    </source>
</evidence>
<evidence type="ECO:0000255" key="3"/>
<evidence type="ECO:0000305" key="4"/>
<gene>
    <name type="primary">COX1</name>
</gene>
<comment type="function">
    <text evidence="2">Component of the cytochrome c oxidase, the last enzyme in the mitochondrial electron transport chain which drives oxidative phosphorylation. The respiratory chain contains 3 multisubunit complexes succinate dehydrogenase (complex II, CII), ubiquinol-cytochrome c oxidoreductase (cytochrome b-c1 complex, complex III, CIII) and cytochrome c oxidase (complex IV, CIV), that cooperate to transfer electrons derived from NADH and succinate to molecular oxygen, creating an electrochemical gradient over the inner membrane that drives transmembrane transport and the ATP synthase. Cytochrome c oxidase is the component of the respiratory chain that catalyzes the reduction of oxygen to water. Electrons originating from reduced cytochrome c in the intermembrane space (IMS) are transferred via the dinuclear copper A center (CU(A)) of subunit 2 and heme A of subunit 1 to the active site in subunit 1, a binuclear center (BNC) formed by heme A3 and copper B (CU(B)). The BNC reduces molecular oxygen to 2 water molecules using 4 electrons from cytochrome c in the IMS and 4 protons from the mitochondrial matrix.</text>
</comment>
<comment type="catalytic activity">
    <reaction evidence="2">
        <text>4 Fe(II)-[cytochrome c] + O2 + 8 H(+)(in) = 4 Fe(III)-[cytochrome c] + 2 H2O + 4 H(+)(out)</text>
        <dbReference type="Rhea" id="RHEA:11436"/>
        <dbReference type="Rhea" id="RHEA-COMP:10350"/>
        <dbReference type="Rhea" id="RHEA-COMP:14399"/>
        <dbReference type="ChEBI" id="CHEBI:15377"/>
        <dbReference type="ChEBI" id="CHEBI:15378"/>
        <dbReference type="ChEBI" id="CHEBI:15379"/>
        <dbReference type="ChEBI" id="CHEBI:29033"/>
        <dbReference type="ChEBI" id="CHEBI:29034"/>
        <dbReference type="EC" id="7.1.1.9"/>
    </reaction>
    <physiologicalReaction direction="left-to-right" evidence="2">
        <dbReference type="Rhea" id="RHEA:11437"/>
    </physiologicalReaction>
</comment>
<comment type="cofactor">
    <cofactor evidence="2">
        <name>heme</name>
        <dbReference type="ChEBI" id="CHEBI:30413"/>
    </cofactor>
    <text evidence="2">Binds 2 heme A groups non-covalently per subunit.</text>
</comment>
<comment type="cofactor">
    <cofactor evidence="2">
        <name>Cu cation</name>
        <dbReference type="ChEBI" id="CHEBI:23378"/>
    </cofactor>
    <text evidence="2">Binds a copper B center.</text>
</comment>
<comment type="pathway">
    <text evidence="2">Energy metabolism; oxidative phosphorylation.</text>
</comment>
<comment type="subunit">
    <text evidence="2">Component of the cytochrome c oxidase (complex IV, CIV), a multisubunit enzyme composed of a catalytic core of 3 subunits and several supernumerary subunits. The complex exists as a monomer or a dimer and forms supercomplexes (SCs) in the inner mitochondrial membrane with ubiquinol-cytochrome c oxidoreductase (cytochrome b-c1 complex, complex III, CIII).</text>
</comment>
<comment type="subcellular location">
    <subcellularLocation>
        <location evidence="2">Mitochondrion inner membrane</location>
        <topology evidence="2">Multi-pass membrane protein</topology>
    </subcellularLocation>
</comment>
<comment type="similarity">
    <text evidence="4">Belongs to the heme-copper respiratory oxidase family.</text>
</comment>
<protein>
    <recommendedName>
        <fullName>Cytochrome c oxidase subunit 1</fullName>
        <ecNumber>7.1.1.9</ecNumber>
    </recommendedName>
    <alternativeName>
        <fullName>Cytochrome c oxidase polypeptide I</fullName>
    </alternativeName>
</protein>
<proteinExistence type="inferred from homology"/>